<gene>
    <name evidence="1" type="primary">smpB</name>
    <name type="ordered locus">Rleg2_0990</name>
</gene>
<evidence type="ECO:0000255" key="1">
    <source>
        <dbReference type="HAMAP-Rule" id="MF_00023"/>
    </source>
</evidence>
<evidence type="ECO:0000256" key="2">
    <source>
        <dbReference type="SAM" id="MobiDB-lite"/>
    </source>
</evidence>
<protein>
    <recommendedName>
        <fullName evidence="1">SsrA-binding protein</fullName>
    </recommendedName>
    <alternativeName>
        <fullName evidence="1">Small protein B</fullName>
    </alternativeName>
</protein>
<organism>
    <name type="scientific">Rhizobium leguminosarum bv. trifolii (strain WSM2304)</name>
    <dbReference type="NCBI Taxonomy" id="395492"/>
    <lineage>
        <taxon>Bacteria</taxon>
        <taxon>Pseudomonadati</taxon>
        <taxon>Pseudomonadota</taxon>
        <taxon>Alphaproteobacteria</taxon>
        <taxon>Hyphomicrobiales</taxon>
        <taxon>Rhizobiaceae</taxon>
        <taxon>Rhizobium/Agrobacterium group</taxon>
        <taxon>Rhizobium</taxon>
    </lineage>
</organism>
<dbReference type="EMBL" id="CP001191">
    <property type="protein sequence ID" value="ACI54284.1"/>
    <property type="molecule type" value="Genomic_DNA"/>
</dbReference>
<dbReference type="RefSeq" id="WP_012557117.1">
    <property type="nucleotide sequence ID" value="NC_011369.1"/>
</dbReference>
<dbReference type="SMR" id="B5ZW65"/>
<dbReference type="STRING" id="395492.Rleg2_0990"/>
<dbReference type="GeneID" id="75219275"/>
<dbReference type="KEGG" id="rlt:Rleg2_0990"/>
<dbReference type="eggNOG" id="COG0691">
    <property type="taxonomic scope" value="Bacteria"/>
</dbReference>
<dbReference type="HOGENOM" id="CLU_108953_0_1_5"/>
<dbReference type="Proteomes" id="UP000008330">
    <property type="component" value="Chromosome"/>
</dbReference>
<dbReference type="GO" id="GO:0005829">
    <property type="term" value="C:cytosol"/>
    <property type="evidence" value="ECO:0007669"/>
    <property type="project" value="TreeGrafter"/>
</dbReference>
<dbReference type="GO" id="GO:0003723">
    <property type="term" value="F:RNA binding"/>
    <property type="evidence" value="ECO:0007669"/>
    <property type="project" value="UniProtKB-UniRule"/>
</dbReference>
<dbReference type="GO" id="GO:0070929">
    <property type="term" value="P:trans-translation"/>
    <property type="evidence" value="ECO:0007669"/>
    <property type="project" value="UniProtKB-UniRule"/>
</dbReference>
<dbReference type="CDD" id="cd09294">
    <property type="entry name" value="SmpB"/>
    <property type="match status" value="1"/>
</dbReference>
<dbReference type="Gene3D" id="2.40.280.10">
    <property type="match status" value="1"/>
</dbReference>
<dbReference type="HAMAP" id="MF_00023">
    <property type="entry name" value="SmpB"/>
    <property type="match status" value="1"/>
</dbReference>
<dbReference type="InterPro" id="IPR023620">
    <property type="entry name" value="SmpB"/>
</dbReference>
<dbReference type="InterPro" id="IPR000037">
    <property type="entry name" value="SsrA-bd_prot"/>
</dbReference>
<dbReference type="InterPro" id="IPR020081">
    <property type="entry name" value="SsrA-bd_prot_CS"/>
</dbReference>
<dbReference type="NCBIfam" id="NF003843">
    <property type="entry name" value="PRK05422.1"/>
    <property type="match status" value="1"/>
</dbReference>
<dbReference type="NCBIfam" id="TIGR00086">
    <property type="entry name" value="smpB"/>
    <property type="match status" value="1"/>
</dbReference>
<dbReference type="PANTHER" id="PTHR30308:SF2">
    <property type="entry name" value="SSRA-BINDING PROTEIN"/>
    <property type="match status" value="1"/>
</dbReference>
<dbReference type="PANTHER" id="PTHR30308">
    <property type="entry name" value="TMRNA-BINDING COMPONENT OF TRANS-TRANSLATION TAGGING COMPLEX"/>
    <property type="match status" value="1"/>
</dbReference>
<dbReference type="Pfam" id="PF01668">
    <property type="entry name" value="SmpB"/>
    <property type="match status" value="1"/>
</dbReference>
<dbReference type="SUPFAM" id="SSF74982">
    <property type="entry name" value="Small protein B (SmpB)"/>
    <property type="match status" value="1"/>
</dbReference>
<dbReference type="PROSITE" id="PS01317">
    <property type="entry name" value="SSRP"/>
    <property type="match status" value="1"/>
</dbReference>
<proteinExistence type="inferred from homology"/>
<reference key="1">
    <citation type="journal article" date="2010" name="Stand. Genomic Sci.">
        <title>Complete genome sequence of Rhizobium leguminosarum bv trifolii strain WSM2304, an effective microsymbiont of the South American clover Trifolium polymorphum.</title>
        <authorList>
            <person name="Reeve W."/>
            <person name="O'Hara G."/>
            <person name="Chain P."/>
            <person name="Ardley J."/>
            <person name="Brau L."/>
            <person name="Nandesena K."/>
            <person name="Tiwari R."/>
            <person name="Malfatti S."/>
            <person name="Kiss H."/>
            <person name="Lapidus A."/>
            <person name="Copeland A."/>
            <person name="Nolan M."/>
            <person name="Land M."/>
            <person name="Ivanova N."/>
            <person name="Mavromatis K."/>
            <person name="Markowitz V."/>
            <person name="Kyrpides N."/>
            <person name="Melino V."/>
            <person name="Denton M."/>
            <person name="Yates R."/>
            <person name="Howieson J."/>
        </authorList>
    </citation>
    <scope>NUCLEOTIDE SEQUENCE [LARGE SCALE GENOMIC DNA]</scope>
    <source>
        <strain>WSM2304</strain>
    </source>
</reference>
<name>SSRP_RHILW</name>
<keyword id="KW-0963">Cytoplasm</keyword>
<keyword id="KW-1185">Reference proteome</keyword>
<keyword id="KW-0694">RNA-binding</keyword>
<accession>B5ZW65</accession>
<comment type="function">
    <text evidence="1">Required for rescue of stalled ribosomes mediated by trans-translation. Binds to transfer-messenger RNA (tmRNA), required for stable association of tmRNA with ribosomes. tmRNA and SmpB together mimic tRNA shape, replacing the anticodon stem-loop with SmpB. tmRNA is encoded by the ssrA gene; the 2 termini fold to resemble tRNA(Ala) and it encodes a 'tag peptide', a short internal open reading frame. During trans-translation Ala-aminoacylated tmRNA acts like a tRNA, entering the A-site of stalled ribosomes, displacing the stalled mRNA. The ribosome then switches to translate the ORF on the tmRNA; the nascent peptide is terminated with the 'tag peptide' encoded by the tmRNA and targeted for degradation. The ribosome is freed to recommence translation, which seems to be the essential function of trans-translation.</text>
</comment>
<comment type="subcellular location">
    <subcellularLocation>
        <location evidence="1">Cytoplasm</location>
    </subcellularLocation>
    <text evidence="1">The tmRNA-SmpB complex associates with stalled 70S ribosomes.</text>
</comment>
<comment type="similarity">
    <text evidence="1">Belongs to the SmpB family.</text>
</comment>
<sequence length="159" mass="18512">MAPKGSQRVVNKVVAENRKARFNYEIIDTYEAGLVLMGTEVKSLREGKANIAESYASDEGGEIWLINSYLPEYLQANRFNHEPRRRRKLLLSGREIHRLRSAVNREGMTLIPLKIYFNDRGRAKMELALAKGKKLHDKRESEKERDWNRQKSRLLKDNG</sequence>
<feature type="chain" id="PRO_1000090177" description="SsrA-binding protein">
    <location>
        <begin position="1"/>
        <end position="159"/>
    </location>
</feature>
<feature type="region of interest" description="Disordered" evidence="2">
    <location>
        <begin position="131"/>
        <end position="159"/>
    </location>
</feature>
<feature type="compositionally biased region" description="Basic and acidic residues" evidence="2">
    <location>
        <begin position="137"/>
        <end position="159"/>
    </location>
</feature>